<organism>
    <name type="scientific">Streptococcus pneumoniae (strain JJA)</name>
    <dbReference type="NCBI Taxonomy" id="488222"/>
    <lineage>
        <taxon>Bacteria</taxon>
        <taxon>Bacillati</taxon>
        <taxon>Bacillota</taxon>
        <taxon>Bacilli</taxon>
        <taxon>Lactobacillales</taxon>
        <taxon>Streptococcaceae</taxon>
        <taxon>Streptococcus</taxon>
    </lineage>
</organism>
<dbReference type="EMBL" id="CP000919">
    <property type="protein sequence ID" value="ACO19040.1"/>
    <property type="molecule type" value="Genomic_DNA"/>
</dbReference>
<dbReference type="RefSeq" id="WP_000710764.1">
    <property type="nucleotide sequence ID" value="NC_012466.1"/>
</dbReference>
<dbReference type="SMR" id="C1CEQ4"/>
<dbReference type="KEGG" id="sjj:SPJ_1215"/>
<dbReference type="HOGENOM" id="CLU_114306_2_2_9"/>
<dbReference type="Proteomes" id="UP000002206">
    <property type="component" value="Chromosome"/>
</dbReference>
<dbReference type="GO" id="GO:1990904">
    <property type="term" value="C:ribonucleoprotein complex"/>
    <property type="evidence" value="ECO:0007669"/>
    <property type="project" value="UniProtKB-KW"/>
</dbReference>
<dbReference type="GO" id="GO:0005840">
    <property type="term" value="C:ribosome"/>
    <property type="evidence" value="ECO:0007669"/>
    <property type="project" value="UniProtKB-KW"/>
</dbReference>
<dbReference type="GO" id="GO:0003735">
    <property type="term" value="F:structural constituent of ribosome"/>
    <property type="evidence" value="ECO:0007669"/>
    <property type="project" value="InterPro"/>
</dbReference>
<dbReference type="GO" id="GO:0006412">
    <property type="term" value="P:translation"/>
    <property type="evidence" value="ECO:0007669"/>
    <property type="project" value="UniProtKB-UniRule"/>
</dbReference>
<dbReference type="Gene3D" id="4.10.830.30">
    <property type="entry name" value="Ribosomal protein L31"/>
    <property type="match status" value="1"/>
</dbReference>
<dbReference type="HAMAP" id="MF_00502">
    <property type="entry name" value="Ribosomal_bL31_2"/>
    <property type="match status" value="1"/>
</dbReference>
<dbReference type="InterPro" id="IPR034704">
    <property type="entry name" value="Ribosomal_bL28/bL31-like_sf"/>
</dbReference>
<dbReference type="InterPro" id="IPR002150">
    <property type="entry name" value="Ribosomal_bL31"/>
</dbReference>
<dbReference type="InterPro" id="IPR027493">
    <property type="entry name" value="Ribosomal_bL31_B"/>
</dbReference>
<dbReference type="InterPro" id="IPR042105">
    <property type="entry name" value="Ribosomal_bL31_sf"/>
</dbReference>
<dbReference type="NCBIfam" id="TIGR00105">
    <property type="entry name" value="L31"/>
    <property type="match status" value="1"/>
</dbReference>
<dbReference type="NCBIfam" id="NF002462">
    <property type="entry name" value="PRK01678.1"/>
    <property type="match status" value="1"/>
</dbReference>
<dbReference type="PANTHER" id="PTHR33280">
    <property type="entry name" value="50S RIBOSOMAL PROTEIN L31, CHLOROPLASTIC"/>
    <property type="match status" value="1"/>
</dbReference>
<dbReference type="PANTHER" id="PTHR33280:SF1">
    <property type="entry name" value="LARGE RIBOSOMAL SUBUNIT PROTEIN BL31C"/>
    <property type="match status" value="1"/>
</dbReference>
<dbReference type="Pfam" id="PF01197">
    <property type="entry name" value="Ribosomal_L31"/>
    <property type="match status" value="1"/>
</dbReference>
<dbReference type="PRINTS" id="PR01249">
    <property type="entry name" value="RIBOSOMALL31"/>
</dbReference>
<dbReference type="SUPFAM" id="SSF143800">
    <property type="entry name" value="L28p-like"/>
    <property type="match status" value="1"/>
</dbReference>
<dbReference type="PROSITE" id="PS01143">
    <property type="entry name" value="RIBOSOMAL_L31"/>
    <property type="match status" value="1"/>
</dbReference>
<gene>
    <name evidence="1" type="primary">rpmE2</name>
    <name type="ordered locus">SPJ_1215</name>
</gene>
<accession>C1CEQ4</accession>
<evidence type="ECO:0000255" key="1">
    <source>
        <dbReference type="HAMAP-Rule" id="MF_00502"/>
    </source>
</evidence>
<evidence type="ECO:0000305" key="2"/>
<reference key="1">
    <citation type="journal article" date="2010" name="Genome Biol.">
        <title>Structure and dynamics of the pan-genome of Streptococcus pneumoniae and closely related species.</title>
        <authorList>
            <person name="Donati C."/>
            <person name="Hiller N.L."/>
            <person name="Tettelin H."/>
            <person name="Muzzi A."/>
            <person name="Croucher N.J."/>
            <person name="Angiuoli S.V."/>
            <person name="Oggioni M."/>
            <person name="Dunning Hotopp J.C."/>
            <person name="Hu F.Z."/>
            <person name="Riley D.R."/>
            <person name="Covacci A."/>
            <person name="Mitchell T.J."/>
            <person name="Bentley S.D."/>
            <person name="Kilian M."/>
            <person name="Ehrlich G.D."/>
            <person name="Rappuoli R."/>
            <person name="Moxon E.R."/>
            <person name="Masignani V."/>
        </authorList>
    </citation>
    <scope>NUCLEOTIDE SEQUENCE [LARGE SCALE GENOMIC DNA]</scope>
    <source>
        <strain>JJA</strain>
    </source>
</reference>
<keyword id="KW-0687">Ribonucleoprotein</keyword>
<keyword id="KW-0689">Ribosomal protein</keyword>
<feature type="chain" id="PRO_1000176997" description="Large ribosomal subunit protein bL31B">
    <location>
        <begin position="1"/>
        <end position="80"/>
    </location>
</feature>
<sequence length="80" mass="9358">MKKDIHPEYRPVVFMDTTTGYQFLSGSTKRSNETVEFEGETYPLIRVEISSDSHPFYTGRQKFTQADGRVDRFNKKYGLK</sequence>
<name>RL31B_STRZJ</name>
<comment type="subunit">
    <text evidence="1">Part of the 50S ribosomal subunit.</text>
</comment>
<comment type="similarity">
    <text evidence="1">Belongs to the bacterial ribosomal protein bL31 family. Type B subfamily.</text>
</comment>
<proteinExistence type="inferred from homology"/>
<protein>
    <recommendedName>
        <fullName evidence="1">Large ribosomal subunit protein bL31B</fullName>
    </recommendedName>
    <alternativeName>
        <fullName evidence="2">50S ribosomal protein L31 type B</fullName>
    </alternativeName>
</protein>